<proteinExistence type="inferred from homology"/>
<name>CYAY_PECCP</name>
<accession>C6DHB9</accession>
<protein>
    <recommendedName>
        <fullName evidence="1">Iron-sulfur cluster assembly protein CyaY</fullName>
    </recommendedName>
</protein>
<feature type="chain" id="PRO_1000203287" description="Iron-sulfur cluster assembly protein CyaY">
    <location>
        <begin position="1"/>
        <end position="106"/>
    </location>
</feature>
<gene>
    <name evidence="1" type="primary">cyaY</name>
    <name type="ordered locus">PC1_3977</name>
</gene>
<sequence length="106" mass="12120">MNDSEFHQLADELMLQLEETLDRFEGDADIDYETNGGVMTLSFENGSKIVINRQEPLHQIWLATKAGGYHFNRQETRWICDRSGEDFITLLSSACSTQAGETVRFE</sequence>
<organism>
    <name type="scientific">Pectobacterium carotovorum subsp. carotovorum (strain PC1)</name>
    <dbReference type="NCBI Taxonomy" id="561230"/>
    <lineage>
        <taxon>Bacteria</taxon>
        <taxon>Pseudomonadati</taxon>
        <taxon>Pseudomonadota</taxon>
        <taxon>Gammaproteobacteria</taxon>
        <taxon>Enterobacterales</taxon>
        <taxon>Pectobacteriaceae</taxon>
        <taxon>Pectobacterium</taxon>
    </lineage>
</organism>
<keyword id="KW-0408">Iron</keyword>
<keyword id="KW-0479">Metal-binding</keyword>
<dbReference type="EMBL" id="CP001657">
    <property type="protein sequence ID" value="ACT14992.1"/>
    <property type="molecule type" value="Genomic_DNA"/>
</dbReference>
<dbReference type="RefSeq" id="WP_015842072.1">
    <property type="nucleotide sequence ID" value="NC_012917.1"/>
</dbReference>
<dbReference type="SMR" id="C6DHB9"/>
<dbReference type="STRING" id="561230.PC1_3977"/>
<dbReference type="KEGG" id="pct:PC1_3977"/>
<dbReference type="eggNOG" id="COG1965">
    <property type="taxonomic scope" value="Bacteria"/>
</dbReference>
<dbReference type="HOGENOM" id="CLU_080880_3_0_6"/>
<dbReference type="OrthoDB" id="285675at2"/>
<dbReference type="Proteomes" id="UP000002736">
    <property type="component" value="Chromosome"/>
</dbReference>
<dbReference type="GO" id="GO:0005829">
    <property type="term" value="C:cytosol"/>
    <property type="evidence" value="ECO:0007669"/>
    <property type="project" value="TreeGrafter"/>
</dbReference>
<dbReference type="GO" id="GO:0008199">
    <property type="term" value="F:ferric iron binding"/>
    <property type="evidence" value="ECO:0007669"/>
    <property type="project" value="InterPro"/>
</dbReference>
<dbReference type="GO" id="GO:0008198">
    <property type="term" value="F:ferrous iron binding"/>
    <property type="evidence" value="ECO:0007669"/>
    <property type="project" value="TreeGrafter"/>
</dbReference>
<dbReference type="GO" id="GO:0016226">
    <property type="term" value="P:iron-sulfur cluster assembly"/>
    <property type="evidence" value="ECO:0007669"/>
    <property type="project" value="UniProtKB-UniRule"/>
</dbReference>
<dbReference type="CDD" id="cd00503">
    <property type="entry name" value="Frataxin"/>
    <property type="match status" value="1"/>
</dbReference>
<dbReference type="Gene3D" id="3.30.920.10">
    <property type="entry name" value="Frataxin/CyaY"/>
    <property type="match status" value="1"/>
</dbReference>
<dbReference type="HAMAP" id="MF_00142">
    <property type="entry name" value="CyaY"/>
    <property type="match status" value="1"/>
</dbReference>
<dbReference type="InterPro" id="IPR047584">
    <property type="entry name" value="CyaY"/>
</dbReference>
<dbReference type="InterPro" id="IPR002908">
    <property type="entry name" value="Frataxin/CyaY"/>
</dbReference>
<dbReference type="InterPro" id="IPR036524">
    <property type="entry name" value="Frataxin/CyaY_sf"/>
</dbReference>
<dbReference type="InterPro" id="IPR020895">
    <property type="entry name" value="Frataxin_CS"/>
</dbReference>
<dbReference type="NCBIfam" id="TIGR03421">
    <property type="entry name" value="FeS_CyaY"/>
    <property type="match status" value="1"/>
</dbReference>
<dbReference type="PANTHER" id="PTHR16821">
    <property type="entry name" value="FRATAXIN"/>
    <property type="match status" value="1"/>
</dbReference>
<dbReference type="PANTHER" id="PTHR16821:SF2">
    <property type="entry name" value="FRATAXIN, MITOCHONDRIAL"/>
    <property type="match status" value="1"/>
</dbReference>
<dbReference type="Pfam" id="PF01491">
    <property type="entry name" value="Frataxin_Cyay"/>
    <property type="match status" value="1"/>
</dbReference>
<dbReference type="SMART" id="SM01219">
    <property type="entry name" value="Frataxin_Cyay"/>
    <property type="match status" value="1"/>
</dbReference>
<dbReference type="SUPFAM" id="SSF55387">
    <property type="entry name" value="Frataxin/Nqo15-like"/>
    <property type="match status" value="1"/>
</dbReference>
<dbReference type="PROSITE" id="PS01344">
    <property type="entry name" value="FRATAXIN_1"/>
    <property type="match status" value="1"/>
</dbReference>
<dbReference type="PROSITE" id="PS50810">
    <property type="entry name" value="FRATAXIN_2"/>
    <property type="match status" value="1"/>
</dbReference>
<evidence type="ECO:0000255" key="1">
    <source>
        <dbReference type="HAMAP-Rule" id="MF_00142"/>
    </source>
</evidence>
<reference key="1">
    <citation type="submission" date="2009-07" db="EMBL/GenBank/DDBJ databases">
        <title>Complete sequence of Pectobacterium carotovorum subsp. carotovorum PC1.</title>
        <authorList>
            <consortium name="US DOE Joint Genome Institute"/>
            <person name="Lucas S."/>
            <person name="Copeland A."/>
            <person name="Lapidus A."/>
            <person name="Glavina del Rio T."/>
            <person name="Tice H."/>
            <person name="Bruce D."/>
            <person name="Goodwin L."/>
            <person name="Pitluck S."/>
            <person name="Munk A.C."/>
            <person name="Brettin T."/>
            <person name="Detter J.C."/>
            <person name="Han C."/>
            <person name="Tapia R."/>
            <person name="Larimer F."/>
            <person name="Land M."/>
            <person name="Hauser L."/>
            <person name="Kyrpides N."/>
            <person name="Mikhailova N."/>
            <person name="Balakrishnan V."/>
            <person name="Glasner J."/>
            <person name="Perna N.T."/>
        </authorList>
    </citation>
    <scope>NUCLEOTIDE SEQUENCE [LARGE SCALE GENOMIC DNA]</scope>
    <source>
        <strain>PC1</strain>
    </source>
</reference>
<comment type="function">
    <text evidence="1">Involved in iron-sulfur (Fe-S) cluster assembly. May act as a regulator of Fe-S biogenesis.</text>
</comment>
<comment type="similarity">
    <text evidence="1">Belongs to the frataxin family.</text>
</comment>